<organism>
    <name type="scientific">Adiantum capillus-veneris</name>
    <name type="common">Maidenhair fern</name>
    <dbReference type="NCBI Taxonomy" id="13818"/>
    <lineage>
        <taxon>Eukaryota</taxon>
        <taxon>Viridiplantae</taxon>
        <taxon>Streptophyta</taxon>
        <taxon>Embryophyta</taxon>
        <taxon>Tracheophyta</taxon>
        <taxon>Polypodiopsida</taxon>
        <taxon>Polypodiidae</taxon>
        <taxon>Polypodiales</taxon>
        <taxon>Pteridineae</taxon>
        <taxon>Pteridaceae</taxon>
        <taxon>Vittarioideae</taxon>
        <taxon>Adiantum</taxon>
    </lineage>
</organism>
<proteinExistence type="evidence at transcript level"/>
<protein>
    <recommendedName>
        <fullName evidence="1">Small ribosomal subunit protein uS11c</fullName>
    </recommendedName>
    <alternativeName>
        <fullName evidence="2">30S ribosomal protein S11, chloroplastic</fullName>
    </alternativeName>
</protein>
<geneLocation type="chloroplast"/>
<comment type="subunit">
    <text evidence="1">Part of the 30S ribosomal subunit.</text>
</comment>
<comment type="subcellular location">
    <subcellularLocation>
        <location>Plastid</location>
        <location>Chloroplast</location>
    </subcellularLocation>
</comment>
<comment type="similarity">
    <text evidence="1">Belongs to the universal ribosomal protein uS11 family.</text>
</comment>
<reference key="1">
    <citation type="journal article" date="2003" name="DNA Res.">
        <title>Complete nucleotide sequence of the chloroplast genome from a leptosporangiate fern, Adiantum capillus-veneris L.</title>
        <authorList>
            <person name="Wolf P.G."/>
            <person name="Rowe C.A."/>
            <person name="Sinclair R.B."/>
            <person name="Hasebe M."/>
        </authorList>
    </citation>
    <scope>NUCLEOTIDE SEQUENCE [LARGE SCALE GENOMIC DNA]</scope>
</reference>
<reference key="2">
    <citation type="journal article" date="2004" name="Gene">
        <title>High levels of RNA editing in a vascular plant chloroplast genome: analysis of transcripts from the fern Adiantum capillus-veneris.</title>
        <authorList>
            <person name="Wolf P.G."/>
            <person name="Rowe C.A."/>
            <person name="Hasebe M."/>
        </authorList>
    </citation>
    <scope>NUCLEOTIDE SEQUENCE [GENOMIC DNA]</scope>
    <scope>ABSENCE OF RNA EDITING</scope>
    <source>
        <tissue>Frond</tissue>
    </source>
</reference>
<feature type="chain" id="PRO_0000123287" description="Small ribosomal subunit protein uS11c">
    <location>
        <begin position="1"/>
        <end position="130"/>
    </location>
</feature>
<gene>
    <name evidence="1" type="primary">rps11</name>
</gene>
<evidence type="ECO:0000255" key="1">
    <source>
        <dbReference type="HAMAP-Rule" id="MF_01310"/>
    </source>
</evidence>
<evidence type="ECO:0000305" key="2"/>
<accession>Q85FJ0</accession>
<dbReference type="EMBL" id="AY178864">
    <property type="protein sequence ID" value="AAP29423.1"/>
    <property type="molecule type" value="Genomic_DNA"/>
</dbReference>
<dbReference type="RefSeq" id="NP_848092.1">
    <property type="nucleotide sequence ID" value="NC_004766.1"/>
</dbReference>
<dbReference type="SMR" id="Q85FJ0"/>
<dbReference type="GeneID" id="807339"/>
<dbReference type="GO" id="GO:0009507">
    <property type="term" value="C:chloroplast"/>
    <property type="evidence" value="ECO:0007669"/>
    <property type="project" value="UniProtKB-SubCell"/>
</dbReference>
<dbReference type="GO" id="GO:1990904">
    <property type="term" value="C:ribonucleoprotein complex"/>
    <property type="evidence" value="ECO:0007669"/>
    <property type="project" value="UniProtKB-KW"/>
</dbReference>
<dbReference type="GO" id="GO:0005840">
    <property type="term" value="C:ribosome"/>
    <property type="evidence" value="ECO:0007669"/>
    <property type="project" value="UniProtKB-KW"/>
</dbReference>
<dbReference type="GO" id="GO:0019843">
    <property type="term" value="F:rRNA binding"/>
    <property type="evidence" value="ECO:0007669"/>
    <property type="project" value="UniProtKB-UniRule"/>
</dbReference>
<dbReference type="GO" id="GO:0003735">
    <property type="term" value="F:structural constituent of ribosome"/>
    <property type="evidence" value="ECO:0007669"/>
    <property type="project" value="InterPro"/>
</dbReference>
<dbReference type="GO" id="GO:0006412">
    <property type="term" value="P:translation"/>
    <property type="evidence" value="ECO:0007669"/>
    <property type="project" value="UniProtKB-UniRule"/>
</dbReference>
<dbReference type="Gene3D" id="3.30.420.80">
    <property type="entry name" value="Ribosomal protein S11"/>
    <property type="match status" value="1"/>
</dbReference>
<dbReference type="HAMAP" id="MF_01310">
    <property type="entry name" value="Ribosomal_uS11"/>
    <property type="match status" value="1"/>
</dbReference>
<dbReference type="InterPro" id="IPR001971">
    <property type="entry name" value="Ribosomal_uS11"/>
</dbReference>
<dbReference type="InterPro" id="IPR019981">
    <property type="entry name" value="Ribosomal_uS11_bac-type"/>
</dbReference>
<dbReference type="InterPro" id="IPR036967">
    <property type="entry name" value="Ribosomal_uS11_sf"/>
</dbReference>
<dbReference type="NCBIfam" id="NF003698">
    <property type="entry name" value="PRK05309.1"/>
    <property type="match status" value="1"/>
</dbReference>
<dbReference type="NCBIfam" id="TIGR03632">
    <property type="entry name" value="uS11_bact"/>
    <property type="match status" value="1"/>
</dbReference>
<dbReference type="PANTHER" id="PTHR11759">
    <property type="entry name" value="40S RIBOSOMAL PROTEIN S14/30S RIBOSOMAL PROTEIN S11"/>
    <property type="match status" value="1"/>
</dbReference>
<dbReference type="Pfam" id="PF00411">
    <property type="entry name" value="Ribosomal_S11"/>
    <property type="match status" value="1"/>
</dbReference>
<dbReference type="PIRSF" id="PIRSF002131">
    <property type="entry name" value="Ribosomal_S11"/>
    <property type="match status" value="1"/>
</dbReference>
<dbReference type="SUPFAM" id="SSF53137">
    <property type="entry name" value="Translational machinery components"/>
    <property type="match status" value="1"/>
</dbReference>
<name>RR11_ADICA</name>
<keyword id="KW-0150">Chloroplast</keyword>
<keyword id="KW-0934">Plastid</keyword>
<keyword id="KW-0687">Ribonucleoprotein</keyword>
<keyword id="KW-0689">Ribosomal protein</keyword>
<keyword id="KW-0694">RNA-binding</keyword>
<keyword id="KW-0699">rRNA-binding</keyword>
<sequence>MSNKSRKIRSRGGKRGVQKGVIHIQASFNNTIITVTDVRGQVIIWSSAGACGFKGTRKSTPFAAQAAAENAIKASVDRGMKQAEVMMSGPGPGRDTALRAIRRSGIILSFIRDVTPMPYNGCRPPRKRRV</sequence>